<feature type="chain" id="PRO_0000110394" description="Beta-ketoacyl-[acyl-carrier-protein] synthase III 2">
    <location>
        <begin position="1"/>
        <end position="327"/>
    </location>
</feature>
<feature type="region of interest" description="ACP-binding" evidence="1">
    <location>
        <begin position="252"/>
        <end position="256"/>
    </location>
</feature>
<feature type="active site" evidence="1">
    <location>
        <position position="114"/>
    </location>
</feature>
<feature type="active site" evidence="1">
    <location>
        <position position="251"/>
    </location>
</feature>
<feature type="active site" evidence="1">
    <location>
        <position position="281"/>
    </location>
</feature>
<accession>Q81JF6</accession>
<accession>Q6I0C9</accession>
<accession>Q6KUA0</accession>
<sequence length="327" mass="36280">MNSKSRITAIGTHVPNQILSNNDLEKMIDTNDEWIVQRTGMKERRIASEDEYSSNLAIKAVENLCTTYKKNLEDVDCIIVATTTADYVFPSVACQIQQYFNIPHTMAFDLNATCAGFTYGLHVGNSLITSGSHKKVLVVATETLSKVTDYTDRTTCILFGDGAGAILLERDENKPSFIAYHMGTNGHGGIHLYRTNLSTTMNDTPLQTNEKIVQNGREVYKWATRTVPVGIKELLHTANMKMDDIDWFIPHSANLRMIESICEKSQIPIHKTLTSVEYMGNTSSVSIPLALDLARKKGKLNNGDTLLLYGFGGGLTHLGLIVEWDLS</sequence>
<proteinExistence type="inferred from homology"/>
<protein>
    <recommendedName>
        <fullName evidence="1">Beta-ketoacyl-[acyl-carrier-protein] synthase III 2</fullName>
        <shortName evidence="1">Beta-ketoacyl-ACP synthase III 2</shortName>
        <shortName evidence="1">KAS III 2</shortName>
        <ecNumber evidence="1">2.3.1.180</ecNumber>
    </recommendedName>
    <alternativeName>
        <fullName evidence="1">3-oxoacyl-[acyl-carrier-protein] synthase 3 2</fullName>
    </alternativeName>
    <alternativeName>
        <fullName evidence="1">3-oxoacyl-[acyl-carrier-protein] synthase III 2</fullName>
    </alternativeName>
</protein>
<organism>
    <name type="scientific">Bacillus anthracis</name>
    <dbReference type="NCBI Taxonomy" id="1392"/>
    <lineage>
        <taxon>Bacteria</taxon>
        <taxon>Bacillati</taxon>
        <taxon>Bacillota</taxon>
        <taxon>Bacilli</taxon>
        <taxon>Bacillales</taxon>
        <taxon>Bacillaceae</taxon>
        <taxon>Bacillus</taxon>
        <taxon>Bacillus cereus group</taxon>
    </lineage>
</organism>
<dbReference type="EC" id="2.3.1.180" evidence="1"/>
<dbReference type="EMBL" id="AE016879">
    <property type="protein sequence ID" value="AAP25732.1"/>
    <property type="molecule type" value="Genomic_DNA"/>
</dbReference>
<dbReference type="EMBL" id="AE017334">
    <property type="protein sequence ID" value="AAT30939.1"/>
    <property type="molecule type" value="Genomic_DNA"/>
</dbReference>
<dbReference type="EMBL" id="AE017225">
    <property type="protein sequence ID" value="AAT54008.1"/>
    <property type="molecule type" value="Genomic_DNA"/>
</dbReference>
<dbReference type="RefSeq" id="NP_844246.1">
    <property type="nucleotide sequence ID" value="NC_003997.3"/>
</dbReference>
<dbReference type="RefSeq" id="WP_001086320.1">
    <property type="nucleotide sequence ID" value="NZ_WXXJ01000017.1"/>
</dbReference>
<dbReference type="RefSeq" id="YP_027957.1">
    <property type="nucleotide sequence ID" value="NC_005945.1"/>
</dbReference>
<dbReference type="SMR" id="Q81JF6"/>
<dbReference type="STRING" id="261594.GBAA_1826"/>
<dbReference type="DNASU" id="1086168"/>
<dbReference type="GeneID" id="45021764"/>
<dbReference type="KEGG" id="ban:BA_1826"/>
<dbReference type="KEGG" id="banh:HYU01_09165"/>
<dbReference type="KEGG" id="bar:GBAA_1826"/>
<dbReference type="KEGG" id="bat:BAS1691"/>
<dbReference type="PATRIC" id="fig|198094.11.peg.1796"/>
<dbReference type="eggNOG" id="COG0332">
    <property type="taxonomic scope" value="Bacteria"/>
</dbReference>
<dbReference type="HOGENOM" id="CLU_039592_3_1_9"/>
<dbReference type="OMA" id="IRNQCSG"/>
<dbReference type="OrthoDB" id="9815506at2"/>
<dbReference type="UniPathway" id="UPA00094"/>
<dbReference type="Proteomes" id="UP000000427">
    <property type="component" value="Chromosome"/>
</dbReference>
<dbReference type="Proteomes" id="UP000000594">
    <property type="component" value="Chromosome"/>
</dbReference>
<dbReference type="GO" id="GO:0005737">
    <property type="term" value="C:cytoplasm"/>
    <property type="evidence" value="ECO:0007669"/>
    <property type="project" value="UniProtKB-SubCell"/>
</dbReference>
<dbReference type="GO" id="GO:0004315">
    <property type="term" value="F:3-oxoacyl-[acyl-carrier-protein] synthase activity"/>
    <property type="evidence" value="ECO:0007669"/>
    <property type="project" value="InterPro"/>
</dbReference>
<dbReference type="GO" id="GO:0033818">
    <property type="term" value="F:beta-ketoacyl-acyl-carrier-protein synthase III activity"/>
    <property type="evidence" value="ECO:0007669"/>
    <property type="project" value="UniProtKB-UniRule"/>
</dbReference>
<dbReference type="GO" id="GO:0006633">
    <property type="term" value="P:fatty acid biosynthetic process"/>
    <property type="evidence" value="ECO:0007669"/>
    <property type="project" value="UniProtKB-UniRule"/>
</dbReference>
<dbReference type="GO" id="GO:0044550">
    <property type="term" value="P:secondary metabolite biosynthetic process"/>
    <property type="evidence" value="ECO:0007669"/>
    <property type="project" value="TreeGrafter"/>
</dbReference>
<dbReference type="CDD" id="cd00830">
    <property type="entry name" value="KAS_III"/>
    <property type="match status" value="1"/>
</dbReference>
<dbReference type="FunFam" id="3.40.47.10:FF:000004">
    <property type="entry name" value="3-oxoacyl-[acyl-carrier-protein] synthase 3"/>
    <property type="match status" value="1"/>
</dbReference>
<dbReference type="Gene3D" id="3.40.47.10">
    <property type="match status" value="1"/>
</dbReference>
<dbReference type="HAMAP" id="MF_01815">
    <property type="entry name" value="FabH"/>
    <property type="match status" value="1"/>
</dbReference>
<dbReference type="InterPro" id="IPR013747">
    <property type="entry name" value="ACP_syn_III_C"/>
</dbReference>
<dbReference type="InterPro" id="IPR013751">
    <property type="entry name" value="ACP_syn_III_N"/>
</dbReference>
<dbReference type="InterPro" id="IPR004655">
    <property type="entry name" value="FabH"/>
</dbReference>
<dbReference type="InterPro" id="IPR016039">
    <property type="entry name" value="Thiolase-like"/>
</dbReference>
<dbReference type="NCBIfam" id="TIGR00747">
    <property type="entry name" value="fabH"/>
    <property type="match status" value="1"/>
</dbReference>
<dbReference type="NCBIfam" id="NF006829">
    <property type="entry name" value="PRK09352.1"/>
    <property type="match status" value="1"/>
</dbReference>
<dbReference type="PANTHER" id="PTHR34069">
    <property type="entry name" value="3-OXOACYL-[ACYL-CARRIER-PROTEIN] SYNTHASE 3"/>
    <property type="match status" value="1"/>
</dbReference>
<dbReference type="PANTHER" id="PTHR34069:SF2">
    <property type="entry name" value="BETA-KETOACYL-[ACYL-CARRIER-PROTEIN] SYNTHASE III"/>
    <property type="match status" value="1"/>
</dbReference>
<dbReference type="Pfam" id="PF08545">
    <property type="entry name" value="ACP_syn_III"/>
    <property type="match status" value="1"/>
</dbReference>
<dbReference type="Pfam" id="PF08541">
    <property type="entry name" value="ACP_syn_III_C"/>
    <property type="match status" value="1"/>
</dbReference>
<dbReference type="SUPFAM" id="SSF53901">
    <property type="entry name" value="Thiolase-like"/>
    <property type="match status" value="1"/>
</dbReference>
<reference key="1">
    <citation type="journal article" date="2003" name="Nature">
        <title>The genome sequence of Bacillus anthracis Ames and comparison to closely related bacteria.</title>
        <authorList>
            <person name="Read T.D."/>
            <person name="Peterson S.N."/>
            <person name="Tourasse N.J."/>
            <person name="Baillie L.W."/>
            <person name="Paulsen I.T."/>
            <person name="Nelson K.E."/>
            <person name="Tettelin H."/>
            <person name="Fouts D.E."/>
            <person name="Eisen J.A."/>
            <person name="Gill S.R."/>
            <person name="Holtzapple E.K."/>
            <person name="Okstad O.A."/>
            <person name="Helgason E."/>
            <person name="Rilstone J."/>
            <person name="Wu M."/>
            <person name="Kolonay J.F."/>
            <person name="Beanan M.J."/>
            <person name="Dodson R.J."/>
            <person name="Brinkac L.M."/>
            <person name="Gwinn M.L."/>
            <person name="DeBoy R.T."/>
            <person name="Madpu R."/>
            <person name="Daugherty S.C."/>
            <person name="Durkin A.S."/>
            <person name="Haft D.H."/>
            <person name="Nelson W.C."/>
            <person name="Peterson J.D."/>
            <person name="Pop M."/>
            <person name="Khouri H.M."/>
            <person name="Radune D."/>
            <person name="Benton J.L."/>
            <person name="Mahamoud Y."/>
            <person name="Jiang L."/>
            <person name="Hance I.R."/>
            <person name="Weidman J.F."/>
            <person name="Berry K.J."/>
            <person name="Plaut R.D."/>
            <person name="Wolf A.M."/>
            <person name="Watkins K.L."/>
            <person name="Nierman W.C."/>
            <person name="Hazen A."/>
            <person name="Cline R.T."/>
            <person name="Redmond C."/>
            <person name="Thwaite J.E."/>
            <person name="White O."/>
            <person name="Salzberg S.L."/>
            <person name="Thomason B."/>
            <person name="Friedlander A.M."/>
            <person name="Koehler T.M."/>
            <person name="Hanna P.C."/>
            <person name="Kolstoe A.-B."/>
            <person name="Fraser C.M."/>
        </authorList>
    </citation>
    <scope>NUCLEOTIDE SEQUENCE [LARGE SCALE GENOMIC DNA]</scope>
    <source>
        <strain>Ames / isolate Porton</strain>
    </source>
</reference>
<reference key="2">
    <citation type="journal article" date="2009" name="J. Bacteriol.">
        <title>The complete genome sequence of Bacillus anthracis Ames 'Ancestor'.</title>
        <authorList>
            <person name="Ravel J."/>
            <person name="Jiang L."/>
            <person name="Stanley S.T."/>
            <person name="Wilson M.R."/>
            <person name="Decker R.S."/>
            <person name="Read T.D."/>
            <person name="Worsham P."/>
            <person name="Keim P.S."/>
            <person name="Salzberg S.L."/>
            <person name="Fraser-Liggett C.M."/>
            <person name="Rasko D.A."/>
        </authorList>
    </citation>
    <scope>NUCLEOTIDE SEQUENCE [LARGE SCALE GENOMIC DNA]</scope>
    <source>
        <strain>Ames ancestor</strain>
    </source>
</reference>
<reference key="3">
    <citation type="submission" date="2004-01" db="EMBL/GenBank/DDBJ databases">
        <title>Complete genome sequence of Bacillus anthracis Sterne.</title>
        <authorList>
            <person name="Brettin T.S."/>
            <person name="Bruce D."/>
            <person name="Challacombe J.F."/>
            <person name="Gilna P."/>
            <person name="Han C."/>
            <person name="Hill K."/>
            <person name="Hitchcock P."/>
            <person name="Jackson P."/>
            <person name="Keim P."/>
            <person name="Longmire J."/>
            <person name="Lucas S."/>
            <person name="Okinaka R."/>
            <person name="Richardson P."/>
            <person name="Rubin E."/>
            <person name="Tice H."/>
        </authorList>
    </citation>
    <scope>NUCLEOTIDE SEQUENCE [LARGE SCALE GENOMIC DNA]</scope>
    <source>
        <strain>Sterne</strain>
    </source>
</reference>
<keyword id="KW-0012">Acyltransferase</keyword>
<keyword id="KW-0963">Cytoplasm</keyword>
<keyword id="KW-0275">Fatty acid biosynthesis</keyword>
<keyword id="KW-0276">Fatty acid metabolism</keyword>
<keyword id="KW-0444">Lipid biosynthesis</keyword>
<keyword id="KW-0443">Lipid metabolism</keyword>
<keyword id="KW-0511">Multifunctional enzyme</keyword>
<keyword id="KW-1185">Reference proteome</keyword>
<keyword id="KW-0808">Transferase</keyword>
<name>FABH2_BACAN</name>
<evidence type="ECO:0000255" key="1">
    <source>
        <dbReference type="HAMAP-Rule" id="MF_01815"/>
    </source>
</evidence>
<comment type="function">
    <text evidence="1">Catalyzes the condensation reaction of fatty acid synthesis by the addition to an acyl acceptor of two carbons from malonyl-ACP. Catalyzes the first condensation reaction which initiates fatty acid synthesis and may therefore play a role in governing the total rate of fatty acid production. Possesses both acetoacetyl-ACP synthase and acetyl transacylase activities. Its substrate specificity determines the biosynthesis of branched-chain and/or straight-chain of fatty acids.</text>
</comment>
<comment type="catalytic activity">
    <reaction evidence="1">
        <text>malonyl-[ACP] + acetyl-CoA + H(+) = 3-oxobutanoyl-[ACP] + CO2 + CoA</text>
        <dbReference type="Rhea" id="RHEA:12080"/>
        <dbReference type="Rhea" id="RHEA-COMP:9623"/>
        <dbReference type="Rhea" id="RHEA-COMP:9625"/>
        <dbReference type="ChEBI" id="CHEBI:15378"/>
        <dbReference type="ChEBI" id="CHEBI:16526"/>
        <dbReference type="ChEBI" id="CHEBI:57287"/>
        <dbReference type="ChEBI" id="CHEBI:57288"/>
        <dbReference type="ChEBI" id="CHEBI:78449"/>
        <dbReference type="ChEBI" id="CHEBI:78450"/>
        <dbReference type="EC" id="2.3.1.180"/>
    </reaction>
</comment>
<comment type="pathway">
    <text evidence="1">Lipid metabolism; fatty acid biosynthesis.</text>
</comment>
<comment type="subunit">
    <text evidence="1">Homodimer.</text>
</comment>
<comment type="subcellular location">
    <subcellularLocation>
        <location evidence="1">Cytoplasm</location>
    </subcellularLocation>
</comment>
<comment type="domain">
    <text evidence="1">The last Arg residue of the ACP-binding site is essential for the weak association between ACP/AcpP and FabH.</text>
</comment>
<comment type="similarity">
    <text evidence="1">Belongs to the thiolase-like superfamily. FabH family.</text>
</comment>
<gene>
    <name evidence="1" type="primary">fabH2</name>
    <name type="ordered locus">BA_1826</name>
    <name type="ordered locus">GBAA_1826</name>
    <name type="ordered locus">BAS1691</name>
</gene>